<comment type="function">
    <text evidence="1">Specifically dimethylates two adjacent adenosines (A1518 and A1519) in the loop of a conserved hairpin near the 3'-end of 16S rRNA in the 30S particle. May play a critical role in biogenesis of 30S subunits.</text>
</comment>
<comment type="catalytic activity">
    <reaction evidence="1">
        <text>adenosine(1518)/adenosine(1519) in 16S rRNA + 4 S-adenosyl-L-methionine = N(6)-dimethyladenosine(1518)/N(6)-dimethyladenosine(1519) in 16S rRNA + 4 S-adenosyl-L-homocysteine + 4 H(+)</text>
        <dbReference type="Rhea" id="RHEA:19609"/>
        <dbReference type="Rhea" id="RHEA-COMP:10232"/>
        <dbReference type="Rhea" id="RHEA-COMP:10233"/>
        <dbReference type="ChEBI" id="CHEBI:15378"/>
        <dbReference type="ChEBI" id="CHEBI:57856"/>
        <dbReference type="ChEBI" id="CHEBI:59789"/>
        <dbReference type="ChEBI" id="CHEBI:74411"/>
        <dbReference type="ChEBI" id="CHEBI:74493"/>
        <dbReference type="EC" id="2.1.1.182"/>
    </reaction>
</comment>
<comment type="subcellular location">
    <subcellularLocation>
        <location evidence="1">Cytoplasm</location>
    </subcellularLocation>
</comment>
<comment type="similarity">
    <text evidence="1">Belongs to the class I-like SAM-binding methyltransferase superfamily. rRNA adenine N(6)-methyltransferase family. RsmA subfamily.</text>
</comment>
<sequence>MHKPIKKLGQNFLKDKKIIKKIINFINPKYKDKIIEIGPGLGALTIPISKISKSITAIEIDKNLVYFLNKNKNIKNNLNIINIDIMKLNLKKFFSSFCDPVRIFGSLPYNISVSLMFNFIENYNKIIDMHFVIQKEVAQRILARPNNKHYGYISVIMQYYFYVEKLIDISNCAFKPIPKVQSSLIRMRPHKVCPFPFCDIDKMKVLLKSAFNQRRKMLKNSLKKYFSVEQIILYKINPKLRAENLSIENYCNLSNNMIIKK</sequence>
<accession>Q8D3I1</accession>
<feature type="chain" id="PRO_0000101641" description="Ribosomal RNA small subunit methyltransferase A">
    <location>
        <begin position="1"/>
        <end position="261"/>
    </location>
</feature>
<feature type="binding site" evidence="1">
    <location>
        <position position="11"/>
    </location>
    <ligand>
        <name>S-adenosyl-L-methionine</name>
        <dbReference type="ChEBI" id="CHEBI:59789"/>
    </ligand>
</feature>
<feature type="binding site" evidence="1">
    <location>
        <position position="13"/>
    </location>
    <ligand>
        <name>S-adenosyl-L-methionine</name>
        <dbReference type="ChEBI" id="CHEBI:59789"/>
    </ligand>
</feature>
<feature type="binding site" evidence="1">
    <location>
        <position position="38"/>
    </location>
    <ligand>
        <name>S-adenosyl-L-methionine</name>
        <dbReference type="ChEBI" id="CHEBI:59789"/>
    </ligand>
</feature>
<feature type="binding site" evidence="1">
    <location>
        <position position="59"/>
    </location>
    <ligand>
        <name>S-adenosyl-L-methionine</name>
        <dbReference type="ChEBI" id="CHEBI:59789"/>
    </ligand>
</feature>
<feature type="binding site" evidence="1">
    <location>
        <position position="84"/>
    </location>
    <ligand>
        <name>S-adenosyl-L-methionine</name>
        <dbReference type="ChEBI" id="CHEBI:59789"/>
    </ligand>
</feature>
<feature type="binding site" evidence="1">
    <location>
        <position position="106"/>
    </location>
    <ligand>
        <name>S-adenosyl-L-methionine</name>
        <dbReference type="ChEBI" id="CHEBI:59789"/>
    </ligand>
</feature>
<evidence type="ECO:0000255" key="1">
    <source>
        <dbReference type="HAMAP-Rule" id="MF_00607"/>
    </source>
</evidence>
<protein>
    <recommendedName>
        <fullName evidence="1">Ribosomal RNA small subunit methyltransferase A</fullName>
        <ecNumber evidence="1">2.1.1.182</ecNumber>
    </recommendedName>
    <alternativeName>
        <fullName evidence="1">16S rRNA (adenine(1518)-N(6)/adenine(1519)-N(6))-dimethyltransferase</fullName>
    </alternativeName>
    <alternativeName>
        <fullName evidence="1">16S rRNA dimethyladenosine transferase</fullName>
    </alternativeName>
    <alternativeName>
        <fullName evidence="1">16S rRNA dimethylase</fullName>
    </alternativeName>
    <alternativeName>
        <fullName evidence="1">S-adenosylmethionine-6-N', N'-adenosyl(rRNA) dimethyltransferase</fullName>
    </alternativeName>
</protein>
<keyword id="KW-0963">Cytoplasm</keyword>
<keyword id="KW-0489">Methyltransferase</keyword>
<keyword id="KW-1185">Reference proteome</keyword>
<keyword id="KW-0694">RNA-binding</keyword>
<keyword id="KW-0698">rRNA processing</keyword>
<keyword id="KW-0949">S-adenosyl-L-methionine</keyword>
<keyword id="KW-0808">Transferase</keyword>
<reference key="1">
    <citation type="journal article" date="2002" name="Nat. Genet.">
        <title>Genome sequence of the endocellular obligate symbiont of tsetse flies, Wigglesworthia glossinidia.</title>
        <authorList>
            <person name="Akman L."/>
            <person name="Yamashita A."/>
            <person name="Watanabe H."/>
            <person name="Oshima K."/>
            <person name="Shiba T."/>
            <person name="Hattori M."/>
            <person name="Aksoy S."/>
        </authorList>
    </citation>
    <scope>NUCLEOTIDE SEQUENCE [LARGE SCALE GENOMIC DNA]</scope>
</reference>
<name>RSMA_WIGBR</name>
<dbReference type="EC" id="2.1.1.182" evidence="1"/>
<dbReference type="EMBL" id="BA000021">
    <property type="protein sequence ID" value="BAC24166.1"/>
    <property type="molecule type" value="Genomic_DNA"/>
</dbReference>
<dbReference type="SMR" id="Q8D3I1"/>
<dbReference type="STRING" id="36870.gene:10368498"/>
<dbReference type="KEGG" id="wbr:ksgA"/>
<dbReference type="eggNOG" id="COG0030">
    <property type="taxonomic scope" value="Bacteria"/>
</dbReference>
<dbReference type="HOGENOM" id="CLU_041220_0_0_6"/>
<dbReference type="OrthoDB" id="9814755at2"/>
<dbReference type="Proteomes" id="UP000000562">
    <property type="component" value="Chromosome"/>
</dbReference>
<dbReference type="GO" id="GO:0005829">
    <property type="term" value="C:cytosol"/>
    <property type="evidence" value="ECO:0007669"/>
    <property type="project" value="TreeGrafter"/>
</dbReference>
<dbReference type="GO" id="GO:0052908">
    <property type="term" value="F:16S rRNA (adenine(1518)-N(6)/adenine(1519)-N(6))-dimethyltransferase activity"/>
    <property type="evidence" value="ECO:0007669"/>
    <property type="project" value="UniProtKB-EC"/>
</dbReference>
<dbReference type="GO" id="GO:0003723">
    <property type="term" value="F:RNA binding"/>
    <property type="evidence" value="ECO:0007669"/>
    <property type="project" value="UniProtKB-KW"/>
</dbReference>
<dbReference type="FunFam" id="1.10.8.100:FF:000001">
    <property type="entry name" value="Ribosomal RNA small subunit methyltransferase A"/>
    <property type="match status" value="1"/>
</dbReference>
<dbReference type="Gene3D" id="1.10.8.100">
    <property type="entry name" value="Ribosomal RNA adenine dimethylase-like, domain 2"/>
    <property type="match status" value="1"/>
</dbReference>
<dbReference type="Gene3D" id="3.40.50.150">
    <property type="entry name" value="Vaccinia Virus protein VP39"/>
    <property type="match status" value="1"/>
</dbReference>
<dbReference type="HAMAP" id="MF_00607">
    <property type="entry name" value="16SrRNA_methyltr_A"/>
    <property type="match status" value="1"/>
</dbReference>
<dbReference type="InterPro" id="IPR001737">
    <property type="entry name" value="KsgA/Erm"/>
</dbReference>
<dbReference type="InterPro" id="IPR023165">
    <property type="entry name" value="rRNA_Ade_diMease-like_C"/>
</dbReference>
<dbReference type="InterPro" id="IPR020596">
    <property type="entry name" value="rRNA_Ade_Mease_Trfase_CS"/>
</dbReference>
<dbReference type="InterPro" id="IPR020598">
    <property type="entry name" value="rRNA_Ade_methylase_Trfase_N"/>
</dbReference>
<dbReference type="InterPro" id="IPR011530">
    <property type="entry name" value="rRNA_adenine_dimethylase"/>
</dbReference>
<dbReference type="InterPro" id="IPR029063">
    <property type="entry name" value="SAM-dependent_MTases_sf"/>
</dbReference>
<dbReference type="NCBIfam" id="TIGR00755">
    <property type="entry name" value="ksgA"/>
    <property type="match status" value="1"/>
</dbReference>
<dbReference type="PANTHER" id="PTHR11727">
    <property type="entry name" value="DIMETHYLADENOSINE TRANSFERASE"/>
    <property type="match status" value="1"/>
</dbReference>
<dbReference type="PANTHER" id="PTHR11727:SF7">
    <property type="entry name" value="DIMETHYLADENOSINE TRANSFERASE-RELATED"/>
    <property type="match status" value="1"/>
</dbReference>
<dbReference type="Pfam" id="PF00398">
    <property type="entry name" value="RrnaAD"/>
    <property type="match status" value="1"/>
</dbReference>
<dbReference type="SMART" id="SM00650">
    <property type="entry name" value="rADc"/>
    <property type="match status" value="1"/>
</dbReference>
<dbReference type="SUPFAM" id="SSF53335">
    <property type="entry name" value="S-adenosyl-L-methionine-dependent methyltransferases"/>
    <property type="match status" value="1"/>
</dbReference>
<dbReference type="PROSITE" id="PS01131">
    <property type="entry name" value="RRNA_A_DIMETH"/>
    <property type="match status" value="1"/>
</dbReference>
<dbReference type="PROSITE" id="PS51689">
    <property type="entry name" value="SAM_RNA_A_N6_MT"/>
    <property type="match status" value="1"/>
</dbReference>
<gene>
    <name evidence="1" type="primary">rsmA</name>
    <name evidence="1" type="synonym">ksgA</name>
    <name type="ordered locus">WIGBR0200</name>
</gene>
<organism>
    <name type="scientific">Wigglesworthia glossinidia brevipalpis</name>
    <dbReference type="NCBI Taxonomy" id="36870"/>
    <lineage>
        <taxon>Bacteria</taxon>
        <taxon>Pseudomonadati</taxon>
        <taxon>Pseudomonadota</taxon>
        <taxon>Gammaproteobacteria</taxon>
        <taxon>Enterobacterales</taxon>
        <taxon>Erwiniaceae</taxon>
        <taxon>Wigglesworthia</taxon>
    </lineage>
</organism>
<proteinExistence type="inferred from homology"/>